<evidence type="ECO:0000250" key="1"/>
<evidence type="ECO:0000255" key="2"/>
<evidence type="ECO:0000269" key="3">
    <source>
    </source>
</evidence>
<evidence type="ECO:0000305" key="4"/>
<keyword id="KW-0150">Chloroplast</keyword>
<keyword id="KW-0456">Lyase</keyword>
<keyword id="KW-0460">Magnesium</keyword>
<keyword id="KW-0464">Manganese</keyword>
<keyword id="KW-0479">Metal-binding</keyword>
<keyword id="KW-0934">Plastid</keyword>
<keyword id="KW-0809">Transit peptide</keyword>
<feature type="transit peptide" description="Chloroplast" evidence="2">
    <location>
        <begin position="1"/>
        <end position="31"/>
    </location>
</feature>
<feature type="chain" id="PRO_0000407982" description="(3S,6E)-nerolidol synthase 1, chloroplastic">
    <location>
        <begin position="32"/>
        <end position="580"/>
    </location>
</feature>
<feature type="short sequence motif" description="DDXXD motif">
    <location>
        <begin position="334"/>
        <end position="338"/>
    </location>
</feature>
<feature type="binding site" evidence="1">
    <location>
        <position position="334"/>
    </location>
    <ligand>
        <name>Mg(2+)</name>
        <dbReference type="ChEBI" id="CHEBI:18420"/>
        <label>1</label>
    </ligand>
</feature>
<feature type="binding site" evidence="1">
    <location>
        <position position="334"/>
    </location>
    <ligand>
        <name>Mg(2+)</name>
        <dbReference type="ChEBI" id="CHEBI:18420"/>
        <label>2</label>
    </ligand>
</feature>
<feature type="binding site" evidence="1">
    <location>
        <position position="338"/>
    </location>
    <ligand>
        <name>Mg(2+)</name>
        <dbReference type="ChEBI" id="CHEBI:18420"/>
        <label>1</label>
    </ligand>
</feature>
<feature type="binding site" evidence="1">
    <location>
        <position position="338"/>
    </location>
    <ligand>
        <name>Mg(2+)</name>
        <dbReference type="ChEBI" id="CHEBI:18420"/>
        <label>2</label>
    </ligand>
</feature>
<feature type="binding site" evidence="1">
    <location>
        <position position="478"/>
    </location>
    <ligand>
        <name>Mg(2+)</name>
        <dbReference type="ChEBI" id="CHEBI:18420"/>
        <label>3</label>
    </ligand>
</feature>
<feature type="binding site" evidence="1">
    <location>
        <position position="482"/>
    </location>
    <ligand>
        <name>Mg(2+)</name>
        <dbReference type="ChEBI" id="CHEBI:18420"/>
        <label>3</label>
    </ligand>
</feature>
<feature type="binding site" evidence="1">
    <location>
        <position position="486"/>
    </location>
    <ligand>
        <name>Mg(2+)</name>
        <dbReference type="ChEBI" id="CHEBI:18420"/>
        <label>3</label>
    </ligand>
</feature>
<feature type="mutagenesis site" description="Dual targeting to mitochondrion and chloroplast; when associated with I-16 deletion." evidence="3">
    <original>W</original>
    <variation>R</variation>
    <location>
        <position position="6"/>
    </location>
</feature>
<feature type="mutagenesis site" description="Dual targeting to mitochondrion and chloroplast; when associated with R-6." evidence="3">
    <location>
        <position position="16"/>
    </location>
</feature>
<sequence length="580" mass="66532">MASSSWAFFKVFNPQIAPKSISHIGQSDLMQLTHKKQLPTFQRRGIAEDSLLPSSTTPIKPMHVETKHTRTMGDIFVQHSQKLELFRNVLRNAAELDALEGLNMIDAVQRLGIDYHFQREIDEILHKQMGIVSACDDLYEVALRFRLLRQHGYFVPEDVFNNFKDSKGTFKQVLGEDIKGLMSLYEASQLGTEGEDTLVEAEKFSGHLLKTSLSHLDRHRARIVGNTLRNPHRKSLASFMARNFFVTSQATNSWLNLLKEVAKTDFNMVRSVHQKEIVQISKWWKELGLVKELKFARDQPLKWYTWSMAGLTDPKLSEERVELTKPISFVYLIDDIFDVYGTLDDLILFTEAVNRWEITAIDHLPDYMKICFKALYDMTNEFSCKVYQKHGWNPLRSLKISWASLCNAFLVEAKWFASGQLPKSEEYLKNGIVSSGVNVGLVHMFFLLGQNITRKSVELLNETPAMISSSAAILRLWDDLGSAKDENQDGNDGSYVRCYLEEHEGCSIEEAREKTINMISDEWKKLNRELLSPNPFPATFTSASLNLARMIPLMYSYDGNQSLPSLKEYMKLMLYETVSM</sequence>
<comment type="function">
    <text evidence="1">Involved in monoterpene (C10) and sesquiterpene (C15) biosynthesis. Converts geranyl diphosphate (GPP) into S-linalool and farnesyl diphosphate (FPP) into (3S)-E-nerolidol (By similarity). Probably not expressed in wild strawberry species.</text>
</comment>
<comment type="catalytic activity">
    <reaction>
        <text>(2E,6E)-farnesyl diphosphate + H2O = (3S,6E)-nerolidol + diphosphate</text>
        <dbReference type="Rhea" id="RHEA:27530"/>
        <dbReference type="ChEBI" id="CHEBI:15377"/>
        <dbReference type="ChEBI" id="CHEBI:33019"/>
        <dbReference type="ChEBI" id="CHEBI:59958"/>
        <dbReference type="ChEBI" id="CHEBI:175763"/>
        <dbReference type="EC" id="4.2.3.48"/>
    </reaction>
</comment>
<comment type="cofactor">
    <cofactor evidence="1">
        <name>Mg(2+)</name>
        <dbReference type="ChEBI" id="CHEBI:18420"/>
    </cofactor>
    <cofactor evidence="1">
        <name>Mn(2+)</name>
        <dbReference type="ChEBI" id="CHEBI:29035"/>
    </cofactor>
    <text evidence="1">Binds 3 Mg(2+) or Mn(2+) ions per subunit.</text>
</comment>
<comment type="pathway">
    <text>Secondary metabolite biosynthesis; terpenoid biosynthesis.</text>
</comment>
<comment type="subcellular location">
    <subcellularLocation>
        <location evidence="3">Plastid</location>
        <location evidence="3">Chloroplast</location>
    </subcellularLocation>
</comment>
<comment type="developmental stage">
    <text evidence="3">Not expressed in red stage fruit tissue.</text>
</comment>
<comment type="domain">
    <text>The Asp-Asp-Xaa-Xaa-Asp/Glu (DDXXD/E) motif is important for the catalytic activity, presumably through binding to Mg(2+).</text>
</comment>
<comment type="similarity">
    <text evidence="4">Belongs to the terpene synthase family. Tpsg subfamily.</text>
</comment>
<proteinExistence type="evidence at protein level"/>
<protein>
    <recommendedName>
        <fullName>(3S,6E)-nerolidol synthase 1, chloroplastic</fullName>
        <shortName>FvNES1</shortName>
        <ecNumber>4.2.3.48</ecNumber>
    </recommendedName>
</protein>
<reference key="1">
    <citation type="patent" date="2002-08-22" number="WO02064764">
        <title>Isoprenoid synthases.</title>
        <authorList>
            <person name="Aharoni A."/>
            <person name="Jongsma M.A."/>
            <person name="Verhoeven H.A."/>
            <person name="Bouwmeester H.J."/>
        </authorList>
    </citation>
    <scope>NUCLEOTIDE SEQUENCE [GENOMIC DNA / MRNA]</scope>
</reference>
<reference key="2">
    <citation type="journal article" date="2004" name="Plant Cell">
        <title>Gain and loss of fruit flavor compounds produced by wild and cultivated strawberry species.</title>
        <authorList>
            <person name="Aharoni A."/>
            <person name="Giri A.P."/>
            <person name="Verstappen F.W."/>
            <person name="Bertea C.M."/>
            <person name="Sevenier R."/>
            <person name="Sun Z."/>
            <person name="Jongsma M.A."/>
            <person name="Schwab W."/>
            <person name="Bouwmeester H.J."/>
        </authorList>
    </citation>
    <scope>NUCLEOTIDE SEQUENCE [GENOMIC DNA / MRNA]</scope>
    <scope>MUTAGENESIS OF TRP-6 AND ILE-16</scope>
    <scope>SUBCELLULAR LOCATION</scope>
    <scope>DEVELOPMENTAL STAGE</scope>
</reference>
<organism>
    <name type="scientific">Fragaria vesca</name>
    <name type="common">Woodland strawberry</name>
    <name type="synonym">Potentilla vesca</name>
    <dbReference type="NCBI Taxonomy" id="57918"/>
    <lineage>
        <taxon>Eukaryota</taxon>
        <taxon>Viridiplantae</taxon>
        <taxon>Streptophyta</taxon>
        <taxon>Embryophyta</taxon>
        <taxon>Tracheophyta</taxon>
        <taxon>Spermatophyta</taxon>
        <taxon>Magnoliopsida</taxon>
        <taxon>eudicotyledons</taxon>
        <taxon>Gunneridae</taxon>
        <taxon>Pentapetalae</taxon>
        <taxon>rosids</taxon>
        <taxon>fabids</taxon>
        <taxon>Rosales</taxon>
        <taxon>Rosaceae</taxon>
        <taxon>Rosoideae</taxon>
        <taxon>Potentilleae</taxon>
        <taxon>Fragariinae</taxon>
        <taxon>Fragaria</taxon>
    </lineage>
</organism>
<accession>P0CV96</accession>
<name>NES1_FRAVE</name>
<dbReference type="EC" id="4.2.3.48"/>
<dbReference type="EMBL" id="AX529002">
    <property type="protein sequence ID" value="CAD57084.1"/>
    <property type="molecule type" value="Unassigned_DNA"/>
</dbReference>
<dbReference type="SMR" id="P0CV96"/>
<dbReference type="UniPathway" id="UPA00213"/>
<dbReference type="GO" id="GO:0009507">
    <property type="term" value="C:chloroplast"/>
    <property type="evidence" value="ECO:0007669"/>
    <property type="project" value="UniProtKB-SubCell"/>
</dbReference>
<dbReference type="GO" id="GO:0000287">
    <property type="term" value="F:magnesium ion binding"/>
    <property type="evidence" value="ECO:0007669"/>
    <property type="project" value="InterPro"/>
</dbReference>
<dbReference type="GO" id="GO:0010333">
    <property type="term" value="F:terpene synthase activity"/>
    <property type="evidence" value="ECO:0007669"/>
    <property type="project" value="InterPro"/>
</dbReference>
<dbReference type="GO" id="GO:0016102">
    <property type="term" value="P:diterpenoid biosynthetic process"/>
    <property type="evidence" value="ECO:0007669"/>
    <property type="project" value="InterPro"/>
</dbReference>
<dbReference type="CDD" id="cd00684">
    <property type="entry name" value="Terpene_cyclase_plant_C1"/>
    <property type="match status" value="1"/>
</dbReference>
<dbReference type="FunFam" id="1.10.600.10:FF:000007">
    <property type="entry name" value="Isoprene synthase, chloroplastic"/>
    <property type="match status" value="1"/>
</dbReference>
<dbReference type="Gene3D" id="1.10.600.10">
    <property type="entry name" value="Farnesyl Diphosphate Synthase"/>
    <property type="match status" value="1"/>
</dbReference>
<dbReference type="Gene3D" id="1.50.10.130">
    <property type="entry name" value="Terpene synthase, N-terminal domain"/>
    <property type="match status" value="1"/>
</dbReference>
<dbReference type="InterPro" id="IPR008949">
    <property type="entry name" value="Isoprenoid_synthase_dom_sf"/>
</dbReference>
<dbReference type="InterPro" id="IPR034741">
    <property type="entry name" value="Terpene_cyclase-like_1_C"/>
</dbReference>
<dbReference type="InterPro" id="IPR044814">
    <property type="entry name" value="Terpene_cyclase_plant_C1"/>
</dbReference>
<dbReference type="InterPro" id="IPR001906">
    <property type="entry name" value="Terpene_synth_N"/>
</dbReference>
<dbReference type="InterPro" id="IPR036965">
    <property type="entry name" value="Terpene_synth_N_sf"/>
</dbReference>
<dbReference type="InterPro" id="IPR050148">
    <property type="entry name" value="Terpene_synthase-like"/>
</dbReference>
<dbReference type="InterPro" id="IPR005630">
    <property type="entry name" value="Terpene_synthase_metal-bd"/>
</dbReference>
<dbReference type="InterPro" id="IPR008930">
    <property type="entry name" value="Terpenoid_cyclase/PrenylTrfase"/>
</dbReference>
<dbReference type="PANTHER" id="PTHR31225">
    <property type="entry name" value="OS04G0344100 PROTEIN-RELATED"/>
    <property type="match status" value="1"/>
</dbReference>
<dbReference type="PANTHER" id="PTHR31225:SF0">
    <property type="entry name" value="S-(+)-LINALOOL SYNTHASE, CHLOROPLASTIC"/>
    <property type="match status" value="1"/>
</dbReference>
<dbReference type="Pfam" id="PF01397">
    <property type="entry name" value="Terpene_synth"/>
    <property type="match status" value="1"/>
</dbReference>
<dbReference type="Pfam" id="PF03936">
    <property type="entry name" value="Terpene_synth_C"/>
    <property type="match status" value="1"/>
</dbReference>
<dbReference type="SFLD" id="SFLDS00005">
    <property type="entry name" value="Isoprenoid_Synthase_Type_I"/>
    <property type="match status" value="1"/>
</dbReference>
<dbReference type="SFLD" id="SFLDG01019">
    <property type="entry name" value="Terpene_Cyclase_Like_1_C_Termi"/>
    <property type="match status" value="1"/>
</dbReference>
<dbReference type="SUPFAM" id="SSF48239">
    <property type="entry name" value="Terpenoid cyclases/Protein prenyltransferases"/>
    <property type="match status" value="1"/>
</dbReference>
<dbReference type="SUPFAM" id="SSF48576">
    <property type="entry name" value="Terpenoid synthases"/>
    <property type="match status" value="1"/>
</dbReference>